<organism>
    <name type="scientific">Dehalococcoides mccartyi (strain CBDB1)</name>
    <dbReference type="NCBI Taxonomy" id="255470"/>
    <lineage>
        <taxon>Bacteria</taxon>
        <taxon>Bacillati</taxon>
        <taxon>Chloroflexota</taxon>
        <taxon>Dehalococcoidia</taxon>
        <taxon>Dehalococcoidales</taxon>
        <taxon>Dehalococcoidaceae</taxon>
        <taxon>Dehalococcoides</taxon>
    </lineage>
</organism>
<proteinExistence type="inferred from homology"/>
<protein>
    <recommendedName>
        <fullName evidence="1">3-isopropylmalate dehydrogenase</fullName>
        <ecNumber evidence="1">1.1.1.85</ecNumber>
    </recommendedName>
    <alternativeName>
        <fullName evidence="1">3-IPM-DH</fullName>
    </alternativeName>
    <alternativeName>
        <fullName evidence="1">Beta-IPM dehydrogenase</fullName>
        <shortName evidence="1">IMDH</shortName>
    </alternativeName>
</protein>
<dbReference type="EC" id="1.1.1.85" evidence="1"/>
<dbReference type="EMBL" id="AJ965256">
    <property type="protein sequence ID" value="CAI82953.1"/>
    <property type="molecule type" value="Genomic_DNA"/>
</dbReference>
<dbReference type="RefSeq" id="WP_011309304.1">
    <property type="nucleotide sequence ID" value="NC_007356.1"/>
</dbReference>
<dbReference type="SMR" id="Q3ZXI7"/>
<dbReference type="KEGG" id="deh:cbdbA804"/>
<dbReference type="HOGENOM" id="CLU_031953_0_3_0"/>
<dbReference type="UniPathway" id="UPA00048">
    <property type="reaction ID" value="UER00072"/>
</dbReference>
<dbReference type="Proteomes" id="UP000000433">
    <property type="component" value="Chromosome"/>
</dbReference>
<dbReference type="GO" id="GO:0005829">
    <property type="term" value="C:cytosol"/>
    <property type="evidence" value="ECO:0007669"/>
    <property type="project" value="TreeGrafter"/>
</dbReference>
<dbReference type="GO" id="GO:0003862">
    <property type="term" value="F:3-isopropylmalate dehydrogenase activity"/>
    <property type="evidence" value="ECO:0007669"/>
    <property type="project" value="UniProtKB-UniRule"/>
</dbReference>
<dbReference type="GO" id="GO:0000287">
    <property type="term" value="F:magnesium ion binding"/>
    <property type="evidence" value="ECO:0007669"/>
    <property type="project" value="InterPro"/>
</dbReference>
<dbReference type="GO" id="GO:0051287">
    <property type="term" value="F:NAD binding"/>
    <property type="evidence" value="ECO:0007669"/>
    <property type="project" value="InterPro"/>
</dbReference>
<dbReference type="GO" id="GO:0009098">
    <property type="term" value="P:L-leucine biosynthetic process"/>
    <property type="evidence" value="ECO:0007669"/>
    <property type="project" value="UniProtKB-UniRule"/>
</dbReference>
<dbReference type="FunFam" id="3.40.718.10:FF:000006">
    <property type="entry name" value="3-isopropylmalate dehydrogenase"/>
    <property type="match status" value="1"/>
</dbReference>
<dbReference type="Gene3D" id="3.40.718.10">
    <property type="entry name" value="Isopropylmalate Dehydrogenase"/>
    <property type="match status" value="1"/>
</dbReference>
<dbReference type="HAMAP" id="MF_01033">
    <property type="entry name" value="LeuB_type1"/>
    <property type="match status" value="1"/>
</dbReference>
<dbReference type="InterPro" id="IPR019818">
    <property type="entry name" value="IsoCit/isopropylmalate_DH_CS"/>
</dbReference>
<dbReference type="InterPro" id="IPR024084">
    <property type="entry name" value="IsoPropMal-DH-like_dom"/>
</dbReference>
<dbReference type="InterPro" id="IPR004429">
    <property type="entry name" value="Isopropylmalate_DH"/>
</dbReference>
<dbReference type="NCBIfam" id="TIGR00169">
    <property type="entry name" value="leuB"/>
    <property type="match status" value="1"/>
</dbReference>
<dbReference type="PANTHER" id="PTHR42979">
    <property type="entry name" value="3-ISOPROPYLMALATE DEHYDROGENASE"/>
    <property type="match status" value="1"/>
</dbReference>
<dbReference type="PANTHER" id="PTHR42979:SF1">
    <property type="entry name" value="3-ISOPROPYLMALATE DEHYDROGENASE"/>
    <property type="match status" value="1"/>
</dbReference>
<dbReference type="Pfam" id="PF00180">
    <property type="entry name" value="Iso_dh"/>
    <property type="match status" value="1"/>
</dbReference>
<dbReference type="SMART" id="SM01329">
    <property type="entry name" value="Iso_dh"/>
    <property type="match status" value="1"/>
</dbReference>
<dbReference type="SUPFAM" id="SSF53659">
    <property type="entry name" value="Isocitrate/Isopropylmalate dehydrogenase-like"/>
    <property type="match status" value="1"/>
</dbReference>
<dbReference type="PROSITE" id="PS00470">
    <property type="entry name" value="IDH_IMDH"/>
    <property type="match status" value="1"/>
</dbReference>
<sequence>MDFKLTVLPGDGIGPEVMDEGLKVLNAVAKKYKHTFKYQYGLIGGCCIDKEGVALSPAALAMCKKSDAVLLAAVGDPRFDDPKLPVHPEDGLLALRKGLGLFANIRPVKVAPSLVNSTPIKAEIVKGTDFIFIRELTGGVYFAKPKKRWTTPAGIRKATDSMTYSENEIERIVRVGFELAKNRKKKLVSVDKANVLLSSRLWRQIVIEVAKDYPEVKVEHVLVDACAMKLILAPTYFDVIVTENLFGDILTDEASMLAGSMGMLPSASLAGIPAKGTKIFGLYEPIHGSAPTIAKQNIANPIATILSIAMMLRYSCGLETEAVEIESAVDKVLAAGYATIDIFKEGNTKLGTAEMGNQITKMIGG</sequence>
<comment type="function">
    <text evidence="1">Catalyzes the oxidation of 3-carboxy-2-hydroxy-4-methylpentanoate (3-isopropylmalate) to 3-carboxy-4-methyl-2-oxopentanoate. The product decarboxylates to 4-methyl-2 oxopentanoate.</text>
</comment>
<comment type="catalytic activity">
    <reaction evidence="1">
        <text>(2R,3S)-3-isopropylmalate + NAD(+) = 4-methyl-2-oxopentanoate + CO2 + NADH</text>
        <dbReference type="Rhea" id="RHEA:32271"/>
        <dbReference type="ChEBI" id="CHEBI:16526"/>
        <dbReference type="ChEBI" id="CHEBI:17865"/>
        <dbReference type="ChEBI" id="CHEBI:35121"/>
        <dbReference type="ChEBI" id="CHEBI:57540"/>
        <dbReference type="ChEBI" id="CHEBI:57945"/>
        <dbReference type="EC" id="1.1.1.85"/>
    </reaction>
</comment>
<comment type="cofactor">
    <cofactor evidence="1">
        <name>Mg(2+)</name>
        <dbReference type="ChEBI" id="CHEBI:18420"/>
    </cofactor>
    <cofactor evidence="1">
        <name>Mn(2+)</name>
        <dbReference type="ChEBI" id="CHEBI:29035"/>
    </cofactor>
    <text evidence="1">Binds 1 Mg(2+) or Mn(2+) ion per subunit.</text>
</comment>
<comment type="pathway">
    <text evidence="1">Amino-acid biosynthesis; L-leucine biosynthesis; L-leucine from 3-methyl-2-oxobutanoate: step 3/4.</text>
</comment>
<comment type="subunit">
    <text evidence="1">Homodimer.</text>
</comment>
<comment type="subcellular location">
    <subcellularLocation>
        <location evidence="1">Cytoplasm</location>
    </subcellularLocation>
</comment>
<comment type="similarity">
    <text evidence="1">Belongs to the isocitrate and isopropylmalate dehydrogenases family. LeuB type 1 subfamily.</text>
</comment>
<gene>
    <name evidence="1" type="primary">leuB</name>
    <name type="ordered locus">cbdbA804</name>
</gene>
<feature type="chain" id="PRO_0000083686" description="3-isopropylmalate dehydrogenase">
    <location>
        <begin position="1"/>
        <end position="365"/>
    </location>
</feature>
<feature type="binding site" evidence="1">
    <location>
        <position position="96"/>
    </location>
    <ligand>
        <name>substrate</name>
    </ligand>
</feature>
<feature type="binding site" evidence="1">
    <location>
        <position position="106"/>
    </location>
    <ligand>
        <name>substrate</name>
    </ligand>
</feature>
<feature type="binding site" evidence="1">
    <location>
        <position position="134"/>
    </location>
    <ligand>
        <name>substrate</name>
    </ligand>
</feature>
<feature type="binding site" evidence="1">
    <location>
        <position position="224"/>
    </location>
    <ligand>
        <name>Mg(2+)</name>
        <dbReference type="ChEBI" id="CHEBI:18420"/>
    </ligand>
</feature>
<feature type="binding site" evidence="1">
    <location>
        <position position="224"/>
    </location>
    <ligand>
        <name>substrate</name>
    </ligand>
</feature>
<feature type="binding site" evidence="1">
    <location>
        <position position="248"/>
    </location>
    <ligand>
        <name>Mg(2+)</name>
        <dbReference type="ChEBI" id="CHEBI:18420"/>
    </ligand>
</feature>
<feature type="binding site" evidence="1">
    <location>
        <position position="252"/>
    </location>
    <ligand>
        <name>Mg(2+)</name>
        <dbReference type="ChEBI" id="CHEBI:18420"/>
    </ligand>
</feature>
<feature type="binding site" evidence="1">
    <location>
        <begin position="288"/>
        <end position="300"/>
    </location>
    <ligand>
        <name>NAD(+)</name>
        <dbReference type="ChEBI" id="CHEBI:57540"/>
    </ligand>
</feature>
<feature type="site" description="Important for catalysis" evidence="1">
    <location>
        <position position="141"/>
    </location>
</feature>
<feature type="site" description="Important for catalysis" evidence="1">
    <location>
        <position position="192"/>
    </location>
</feature>
<accession>Q3ZXI7</accession>
<keyword id="KW-0028">Amino-acid biosynthesis</keyword>
<keyword id="KW-0100">Branched-chain amino acid biosynthesis</keyword>
<keyword id="KW-0963">Cytoplasm</keyword>
<keyword id="KW-0432">Leucine biosynthesis</keyword>
<keyword id="KW-0460">Magnesium</keyword>
<keyword id="KW-0464">Manganese</keyword>
<keyword id="KW-0479">Metal-binding</keyword>
<keyword id="KW-0520">NAD</keyword>
<keyword id="KW-0560">Oxidoreductase</keyword>
<name>LEU3_DEHMC</name>
<evidence type="ECO:0000255" key="1">
    <source>
        <dbReference type="HAMAP-Rule" id="MF_01033"/>
    </source>
</evidence>
<reference key="1">
    <citation type="journal article" date="2005" name="Nat. Biotechnol.">
        <title>Genome sequence of the chlorinated compound-respiring bacterium Dehalococcoides species strain CBDB1.</title>
        <authorList>
            <person name="Kube M."/>
            <person name="Beck A."/>
            <person name="Zinder S.H."/>
            <person name="Kuhl H."/>
            <person name="Reinhardt R."/>
            <person name="Adrian L."/>
        </authorList>
    </citation>
    <scope>NUCLEOTIDE SEQUENCE [LARGE SCALE GENOMIC DNA]</scope>
    <source>
        <strain>CBDB1</strain>
    </source>
</reference>